<protein>
    <recommendedName>
        <fullName evidence="10">Stimulator of interferon genes protein</fullName>
        <shortName evidence="10">poSTING</shortName>
    </recommendedName>
    <alternativeName>
        <fullName evidence="11">Transmembrane protein 173</fullName>
    </alternativeName>
</protein>
<keyword id="KW-0002">3D-structure</keyword>
<keyword id="KW-0072">Autophagy</keyword>
<keyword id="KW-1003">Cell membrane</keyword>
<keyword id="KW-0963">Cytoplasm</keyword>
<keyword id="KW-0968">Cytoplasmic vesicle</keyword>
<keyword id="KW-0256">Endoplasmic reticulum</keyword>
<keyword id="KW-0333">Golgi apparatus</keyword>
<keyword id="KW-0945">Host-virus interaction</keyword>
<keyword id="KW-0391">Immunity</keyword>
<keyword id="KW-0399">Innate immunity</keyword>
<keyword id="KW-0407">Ion channel</keyword>
<keyword id="KW-0406">Ion transport</keyword>
<keyword id="KW-1017">Isopeptide bond</keyword>
<keyword id="KW-0449">Lipoprotein</keyword>
<keyword id="KW-0472">Membrane</keyword>
<keyword id="KW-0496">Mitochondrion</keyword>
<keyword id="KW-1000">Mitochondrion outer membrane</keyword>
<keyword id="KW-0547">Nucleotide-binding</keyword>
<keyword id="KW-0564">Palmitate</keyword>
<keyword id="KW-0597">Phosphoprotein</keyword>
<keyword id="KW-1185">Reference proteome</keyword>
<keyword id="KW-0812">Transmembrane</keyword>
<keyword id="KW-1133">Transmembrane helix</keyword>
<keyword id="KW-0813">Transport</keyword>
<keyword id="KW-0832">Ubl conjugation</keyword>
<feature type="chain" id="PRO_0000404587" description="Stimulator of interferon genes protein">
    <location>
        <begin position="1"/>
        <end position="378"/>
    </location>
</feature>
<feature type="topological domain" description="Cytoplasmic" evidence="11">
    <location>
        <begin position="1"/>
        <end position="17"/>
    </location>
</feature>
<feature type="transmembrane region" description="Helical; Name=1" evidence="3">
    <location>
        <begin position="18"/>
        <end position="34"/>
    </location>
</feature>
<feature type="topological domain" description="Lumenal" evidence="11">
    <location>
        <begin position="35"/>
        <end position="44"/>
    </location>
</feature>
<feature type="transmembrane region" description="Helical; Name=2" evidence="3">
    <location>
        <begin position="45"/>
        <end position="69"/>
    </location>
</feature>
<feature type="topological domain" description="Cytoplasmic" evidence="11">
    <location>
        <begin position="70"/>
        <end position="91"/>
    </location>
</feature>
<feature type="transmembrane region" description="Helical; Name=3" evidence="3">
    <location>
        <begin position="92"/>
        <end position="106"/>
    </location>
</feature>
<feature type="topological domain" description="Lumenal" evidence="11">
    <location>
        <begin position="107"/>
        <end position="116"/>
    </location>
</feature>
<feature type="transmembrane region" description="Helical; Name=4" evidence="3">
    <location>
        <begin position="117"/>
        <end position="134"/>
    </location>
</feature>
<feature type="topological domain" description="Cytoplasmic" evidence="11">
    <location>
        <begin position="135"/>
        <end position="378"/>
    </location>
</feature>
<feature type="region of interest" description="Mediates interaction with ZDHHC1 and ZDHHC11" evidence="3">
    <location>
        <begin position="1"/>
        <end position="190"/>
    </location>
</feature>
<feature type="region of interest" description="Cyclic dinucleotide-binding domain (CBD)" evidence="3">
    <location>
        <begin position="153"/>
        <end position="339"/>
    </location>
</feature>
<feature type="region of interest" description="C-terminal tail (CTT)" evidence="3">
    <location>
        <begin position="339"/>
        <end position="378"/>
    </location>
</feature>
<feature type="short sequence motif" description="pLxIS motif" evidence="3">
    <location>
        <begin position="362"/>
        <end position="365"/>
    </location>
</feature>
<feature type="binding site" evidence="3">
    <location>
        <position position="162"/>
    </location>
    <ligand>
        <name>2',3'-cGAMP</name>
        <dbReference type="ChEBI" id="CHEBI:143093"/>
    </ligand>
</feature>
<feature type="binding site" evidence="3">
    <location>
        <position position="162"/>
    </location>
    <ligand>
        <name>3',3'-c-di-GMP</name>
        <dbReference type="ChEBI" id="CHEBI:58805"/>
    </ligand>
</feature>
<feature type="binding site" evidence="3">
    <location>
        <position position="167"/>
    </location>
    <ligand>
        <name>2',3'-cGAMP</name>
        <dbReference type="ChEBI" id="CHEBI:143093"/>
    </ligand>
</feature>
<feature type="binding site" evidence="3">
    <location>
        <position position="167"/>
    </location>
    <ligand>
        <name>2',3'-cUAMP</name>
        <dbReference type="ChEBI" id="CHEBI:228269"/>
    </ligand>
</feature>
<feature type="binding site" evidence="3">
    <location>
        <position position="167"/>
    </location>
    <ligand>
        <name>3',3'-c-di-GMP</name>
        <dbReference type="ChEBI" id="CHEBI:58805"/>
    </ligand>
</feature>
<feature type="binding site" evidence="3">
    <location>
        <begin position="238"/>
        <end position="241"/>
    </location>
    <ligand>
        <name>3',3'-c-di-GMP</name>
        <dbReference type="ChEBI" id="CHEBI:58805"/>
    </ligand>
</feature>
<feature type="binding site" evidence="3">
    <location>
        <position position="238"/>
    </location>
    <ligand>
        <name>2',3'-cGAMP</name>
        <dbReference type="ChEBI" id="CHEBI:143093"/>
    </ligand>
</feature>
<feature type="binding site" evidence="3">
    <location>
        <position position="238"/>
    </location>
    <ligand>
        <name>2',3'-cUAMP</name>
        <dbReference type="ChEBI" id="CHEBI:228269"/>
    </ligand>
</feature>
<feature type="binding site" evidence="3">
    <location>
        <position position="263"/>
    </location>
    <ligand>
        <name>2',3'-cGAMP</name>
        <dbReference type="ChEBI" id="CHEBI:143093"/>
    </ligand>
</feature>
<feature type="binding site" evidence="3">
    <location>
        <position position="263"/>
    </location>
    <ligand>
        <name>2',3'-cUAMP</name>
        <dbReference type="ChEBI" id="CHEBI:228269"/>
    </ligand>
</feature>
<feature type="binding site" evidence="3">
    <location>
        <position position="263"/>
    </location>
    <ligand>
        <name>3',3'-c-di-GMP</name>
        <dbReference type="ChEBI" id="CHEBI:58805"/>
    </ligand>
</feature>
<feature type="modified residue" description="Phosphoserine" evidence="3">
    <location>
        <position position="354"/>
    </location>
</feature>
<feature type="modified residue" description="Phosphothreonine" evidence="3">
    <location>
        <position position="355"/>
    </location>
</feature>
<feature type="modified residue" description="Phosphoserine; by TBK1" evidence="3">
    <location>
        <position position="357"/>
    </location>
</feature>
<feature type="modified residue" description="Phosphoserine; by TBK1" evidence="3">
    <location>
        <position position="365"/>
    </location>
</feature>
<feature type="lipid moiety-binding region" description="S-palmitoyl cysteine" evidence="2">
    <location>
        <position position="88"/>
    </location>
</feature>
<feature type="lipid moiety-binding region" description="S-palmitoyl cysteine" evidence="2">
    <location>
        <position position="91"/>
    </location>
</feature>
<feature type="cross-link" description="Glycyl lysine isopeptide (Lys-Gly) (interchain with G-Cter in ubiquitin)" evidence="3">
    <location>
        <position position="150"/>
    </location>
</feature>
<feature type="cross-link" description="Glycyl lysine isopeptide (Lys-Gly) (interchain with G-Cter in ubiquitin)" evidence="3">
    <location>
        <position position="236"/>
    </location>
</feature>
<feature type="helix" evidence="18">
    <location>
        <begin position="156"/>
        <end position="166"/>
    </location>
</feature>
<feature type="helix" evidence="18">
    <location>
        <begin position="168"/>
        <end position="190"/>
    </location>
</feature>
<feature type="strand" evidence="18">
    <location>
        <begin position="197"/>
        <end position="203"/>
    </location>
</feature>
<feature type="helix" evidence="18">
    <location>
        <begin position="212"/>
        <end position="215"/>
    </location>
</feature>
<feature type="strand" evidence="18">
    <location>
        <begin position="219"/>
        <end position="224"/>
    </location>
</feature>
<feature type="strand" evidence="18">
    <location>
        <begin position="228"/>
        <end position="232"/>
    </location>
</feature>
<feature type="strand" evidence="18">
    <location>
        <begin position="235"/>
        <end position="240"/>
    </location>
</feature>
<feature type="strand" evidence="18">
    <location>
        <begin position="243"/>
        <end position="249"/>
    </location>
</feature>
<feature type="strand" evidence="18">
    <location>
        <begin position="252"/>
        <end position="261"/>
    </location>
</feature>
<feature type="helix" evidence="18">
    <location>
        <begin position="264"/>
        <end position="272"/>
    </location>
</feature>
<feature type="helix" evidence="18">
    <location>
        <begin position="281"/>
        <end position="300"/>
    </location>
</feature>
<feature type="helix" evidence="18">
    <location>
        <begin position="303"/>
        <end position="308"/>
    </location>
</feature>
<feature type="strand" evidence="18">
    <location>
        <begin position="309"/>
        <end position="314"/>
    </location>
</feature>
<feature type="strand" evidence="17">
    <location>
        <begin position="318"/>
        <end position="320"/>
    </location>
</feature>
<feature type="helix" evidence="18">
    <location>
        <begin position="325"/>
        <end position="337"/>
    </location>
</feature>
<proteinExistence type="evidence at protein level"/>
<organism>
    <name type="scientific">Sus scrofa</name>
    <name type="common">Pig</name>
    <dbReference type="NCBI Taxonomy" id="9823"/>
    <lineage>
        <taxon>Eukaryota</taxon>
        <taxon>Metazoa</taxon>
        <taxon>Chordata</taxon>
        <taxon>Craniata</taxon>
        <taxon>Vertebrata</taxon>
        <taxon>Euteleostomi</taxon>
        <taxon>Mammalia</taxon>
        <taxon>Eutheria</taxon>
        <taxon>Laurasiatheria</taxon>
        <taxon>Artiodactyla</taxon>
        <taxon>Suina</taxon>
        <taxon>Suidae</taxon>
        <taxon>Sus</taxon>
    </lineage>
</organism>
<reference key="1">
    <citation type="journal article" date="2010" name="Dev. Comp. Immunol.">
        <title>Molecular cloning and functional characterization of porcine stimulator of interferon genes (STING).</title>
        <authorList>
            <person name="Xie L."/>
            <person name="Liu M."/>
            <person name="Fang L."/>
            <person name="Su X."/>
            <person name="Cai K."/>
            <person name="Wang D."/>
            <person name="Chen H."/>
            <person name="Xiao S."/>
        </authorList>
    </citation>
    <scope>NUCLEOTIDE SEQUENCE [MRNA]</scope>
    <scope>SUBCELLULAR LOCATION</scope>
    <scope>TISSUE SPECIFICITY</scope>
</reference>
<reference key="2">
    <citation type="journal article" date="2021" name="J. Immunol.">
        <title>African Swine Fever Virus MGF-505-7R Negatively Regulates cGAS-STING-Mediated Signaling Pathway.</title>
        <authorList>
            <person name="Li D."/>
            <person name="Yang W."/>
            <person name="Li L."/>
            <person name="Li P."/>
            <person name="Ma Z."/>
            <person name="Zhang J."/>
            <person name="Qi X."/>
            <person name="Ren J."/>
            <person name="Ru Y."/>
            <person name="Niu Q."/>
            <person name="Liu Z."/>
            <person name="Liu X."/>
            <person name="Zheng H."/>
        </authorList>
    </citation>
    <scope>INTERACTION WITH AFRICAN SWINE FEVER VIRUS PROTEIN A528R (MICROBIAL INFECTION)</scope>
</reference>
<reference key="3">
    <citation type="journal article" date="2022" name="Front. Immunol.">
        <title>African Swine Fever Virus Structural Protein p17 Inhibits cGAS-STING Signaling Pathway Through Interacting With STING.</title>
        <authorList>
            <person name="Zheng W."/>
            <person name="Xia N."/>
            <person name="Zhang J."/>
            <person name="Cao Q."/>
            <person name="Jiang S."/>
            <person name="Luo J."/>
            <person name="Wang H."/>
            <person name="Chen N."/>
            <person name="Zhang Q."/>
            <person name="Meurens F."/>
            <person name="Zhu J."/>
        </authorList>
    </citation>
    <scope>INTERACTION WITH MINOR CAPSID PROTEIN P17 (MICROBIAL INFECTION)</scope>
</reference>
<reference evidence="12 13 14 15 16" key="4">
    <citation type="journal article" date="2019" name="J. Biol. Chem.">
        <title>Crystal structures of porcine STINGCBD-CDN complexes reveal the mechanism of ligand recognition and discrimination of STING proteins.</title>
        <authorList>
            <person name="Cong X."/>
            <person name="Yuan Z."/>
            <person name="Du Y."/>
            <person name="Wu B."/>
            <person name="Lu D."/>
            <person name="Wu X."/>
            <person name="Zhang Y."/>
            <person name="Li F."/>
            <person name="Wei B."/>
            <person name="Li J."/>
            <person name="Wu J."/>
            <person name="Xu S."/>
            <person name="Wang J."/>
            <person name="Qi J."/>
            <person name="Shang G."/>
            <person name="Gu L."/>
        </authorList>
    </citation>
    <scope>X-RAY CRYSTALLOGRAPHY (1.76 ANGSTROMS) OF 152-342</scope>
    <scope>FUNCTION</scope>
</reference>
<reference key="5">
    <citation type="journal article" date="2022" name="PLoS Pathog.">
        <title>Pseudorabies virus tegument protein UL13 recruits RNF5 to inhibit STING-mediated antiviral immunity.</title>
        <authorList>
            <person name="Kong Z."/>
            <person name="Yin H."/>
            <person name="Wang F."/>
            <person name="Liu Z."/>
            <person name="Luan X."/>
            <person name="Sun L."/>
            <person name="Liu W."/>
            <person name="Shang Y."/>
        </authorList>
    </citation>
    <scope>FUNCTION</scope>
    <scope>INTERACTION WITH PSEUDORABIES VIRUS PROTEIN UL13 (MICROBIAL INFECTION)</scope>
    <scope>SUBCELLULAR LOCATION</scope>
</reference>
<sequence>MPYSSLHPSIPQPRGLRAQVAALVLLGACLVALWGLGELPEYTLRWLVLHLASQQIGLLVKGLCSLAEELCHVHSRYQSSYWRAARACLGCPIRCGALLLLSCYFYFSIRDKAGLPLPWMLALLGLSQALNILLGLQHLAPAEVSAICEKRNFNVAHGLAWSYYIGYLRLILPGLRARIQAYNQRHKNVLGGIGNHRLHILFPLDCGVPDDLSVADPNIRFLHELPQQSADRAGIKGRVYTNSIYELLENGQPAGVCVLGYATPLQTLFAMSQDGRAGFSREDRLEQAKLFCRTLEDILADAPEAQNNCRLIVYQEPTEGGSFSLSQEILRHLRQEEREVTMGSAETSVVPTSSTLSQEPELLISGMEQPLPLRSDIF</sequence>
<dbReference type="EMBL" id="FJ455509">
    <property type="protein sequence ID" value="ACJ70708.1"/>
    <property type="molecule type" value="mRNA"/>
</dbReference>
<dbReference type="RefSeq" id="NP_001136310.1">
    <property type="nucleotide sequence ID" value="NM_001142838.1"/>
</dbReference>
<dbReference type="PDB" id="6A03">
    <property type="method" value="X-ray"/>
    <property type="resolution" value="2.60 A"/>
    <property type="chains" value="A/B=152-342"/>
</dbReference>
<dbReference type="PDB" id="6A04">
    <property type="method" value="X-ray"/>
    <property type="resolution" value="1.90 A"/>
    <property type="chains" value="A/B=152-342"/>
</dbReference>
<dbReference type="PDB" id="6A05">
    <property type="method" value="X-ray"/>
    <property type="resolution" value="2.20 A"/>
    <property type="chains" value="A/B=152-342"/>
</dbReference>
<dbReference type="PDB" id="6A06">
    <property type="method" value="X-ray"/>
    <property type="resolution" value="1.79 A"/>
    <property type="chains" value="A/B=152-342"/>
</dbReference>
<dbReference type="PDB" id="6IYF">
    <property type="method" value="X-ray"/>
    <property type="resolution" value="1.76 A"/>
    <property type="chains" value="A/B=152-342"/>
</dbReference>
<dbReference type="PDBsum" id="6A03"/>
<dbReference type="PDBsum" id="6A04"/>
<dbReference type="PDBsum" id="6A05"/>
<dbReference type="PDBsum" id="6A06"/>
<dbReference type="PDBsum" id="6IYF"/>
<dbReference type="SMR" id="B8XX90"/>
<dbReference type="FunCoup" id="B8XX90">
    <property type="interactions" value="466"/>
</dbReference>
<dbReference type="STRING" id="9823.ENSSSCP00000015264"/>
<dbReference type="GlyGen" id="B8XX90">
    <property type="glycosylation" value="1 site"/>
</dbReference>
<dbReference type="PaxDb" id="9823-ENSSSCP00000015264"/>
<dbReference type="GeneID" id="100217389"/>
<dbReference type="KEGG" id="ssc:100217389"/>
<dbReference type="CTD" id="340061"/>
<dbReference type="eggNOG" id="ENOG502R15M">
    <property type="taxonomic scope" value="Eukaryota"/>
</dbReference>
<dbReference type="InParanoid" id="B8XX90"/>
<dbReference type="OrthoDB" id="6053839at2759"/>
<dbReference type="Proteomes" id="UP000008227">
    <property type="component" value="Unplaced"/>
</dbReference>
<dbReference type="Proteomes" id="UP000314985">
    <property type="component" value="Unplaced"/>
</dbReference>
<dbReference type="Proteomes" id="UP000694570">
    <property type="component" value="Unplaced"/>
</dbReference>
<dbReference type="Proteomes" id="UP000694571">
    <property type="component" value="Unplaced"/>
</dbReference>
<dbReference type="Proteomes" id="UP000694720">
    <property type="component" value="Unplaced"/>
</dbReference>
<dbReference type="Proteomes" id="UP000694722">
    <property type="component" value="Unplaced"/>
</dbReference>
<dbReference type="Proteomes" id="UP000694723">
    <property type="component" value="Unplaced"/>
</dbReference>
<dbReference type="Proteomes" id="UP000694724">
    <property type="component" value="Unplaced"/>
</dbReference>
<dbReference type="Proteomes" id="UP000694725">
    <property type="component" value="Unplaced"/>
</dbReference>
<dbReference type="Proteomes" id="UP000694726">
    <property type="component" value="Unplaced"/>
</dbReference>
<dbReference type="Proteomes" id="UP000694727">
    <property type="component" value="Unplaced"/>
</dbReference>
<dbReference type="Proteomes" id="UP000694728">
    <property type="component" value="Unplaced"/>
</dbReference>
<dbReference type="GO" id="GO:0005776">
    <property type="term" value="C:autophagosome"/>
    <property type="evidence" value="ECO:0000318"/>
    <property type="project" value="GO_Central"/>
</dbReference>
<dbReference type="GO" id="GO:0000421">
    <property type="term" value="C:autophagosome membrane"/>
    <property type="evidence" value="ECO:0007669"/>
    <property type="project" value="UniProtKB-SubCell"/>
</dbReference>
<dbReference type="GO" id="GO:0005737">
    <property type="term" value="C:cytoplasm"/>
    <property type="evidence" value="ECO:0000250"/>
    <property type="project" value="UniProtKB"/>
</dbReference>
<dbReference type="GO" id="GO:0031410">
    <property type="term" value="C:cytoplasmic vesicle"/>
    <property type="evidence" value="ECO:0007669"/>
    <property type="project" value="UniProtKB-KW"/>
</dbReference>
<dbReference type="GO" id="GO:0005789">
    <property type="term" value="C:endoplasmic reticulum membrane"/>
    <property type="evidence" value="ECO:0000250"/>
    <property type="project" value="UniProtKB"/>
</dbReference>
<dbReference type="GO" id="GO:0033116">
    <property type="term" value="C:endoplasmic reticulum-Golgi intermediate compartment membrane"/>
    <property type="evidence" value="ECO:0007669"/>
    <property type="project" value="UniProtKB-SubCell"/>
</dbReference>
<dbReference type="GO" id="GO:0000139">
    <property type="term" value="C:Golgi membrane"/>
    <property type="evidence" value="ECO:0007669"/>
    <property type="project" value="UniProtKB-SubCell"/>
</dbReference>
<dbReference type="GO" id="GO:0005741">
    <property type="term" value="C:mitochondrial outer membrane"/>
    <property type="evidence" value="ECO:0007669"/>
    <property type="project" value="UniProtKB-SubCell"/>
</dbReference>
<dbReference type="GO" id="GO:0048471">
    <property type="term" value="C:perinuclear region of cytoplasm"/>
    <property type="evidence" value="ECO:0000250"/>
    <property type="project" value="UniProtKB"/>
</dbReference>
<dbReference type="GO" id="GO:0005886">
    <property type="term" value="C:plasma membrane"/>
    <property type="evidence" value="ECO:0007669"/>
    <property type="project" value="UniProtKB-SubCell"/>
</dbReference>
<dbReference type="GO" id="GO:0061507">
    <property type="term" value="F:2',3'-cyclic GMP-AMP binding"/>
    <property type="evidence" value="ECO:0000250"/>
    <property type="project" value="UniProtKB"/>
</dbReference>
<dbReference type="GO" id="GO:0035438">
    <property type="term" value="F:cyclic-di-GMP binding"/>
    <property type="evidence" value="ECO:0000250"/>
    <property type="project" value="UniProtKB"/>
</dbReference>
<dbReference type="GO" id="GO:0042803">
    <property type="term" value="F:protein homodimerization activity"/>
    <property type="evidence" value="ECO:0000250"/>
    <property type="project" value="UniProtKB"/>
</dbReference>
<dbReference type="GO" id="GO:0015252">
    <property type="term" value="F:proton channel activity"/>
    <property type="evidence" value="ECO:0000250"/>
    <property type="project" value="UniProtKB"/>
</dbReference>
<dbReference type="GO" id="GO:0035591">
    <property type="term" value="F:signaling adaptor activity"/>
    <property type="evidence" value="ECO:0000250"/>
    <property type="project" value="UniProtKB"/>
</dbReference>
<dbReference type="GO" id="GO:0002218">
    <property type="term" value="P:activation of innate immune response"/>
    <property type="evidence" value="ECO:0000250"/>
    <property type="project" value="UniProtKB"/>
</dbReference>
<dbReference type="GO" id="GO:0000045">
    <property type="term" value="P:autophagosome assembly"/>
    <property type="evidence" value="ECO:0000250"/>
    <property type="project" value="UniProtKB"/>
</dbReference>
<dbReference type="GO" id="GO:0140896">
    <property type="term" value="P:cGAS/STING signaling pathway"/>
    <property type="evidence" value="ECO:0000250"/>
    <property type="project" value="UniProtKB"/>
</dbReference>
<dbReference type="GO" id="GO:0051607">
    <property type="term" value="P:defense response to virus"/>
    <property type="evidence" value="ECO:0000250"/>
    <property type="project" value="UniProtKB"/>
</dbReference>
<dbReference type="GO" id="GO:0045087">
    <property type="term" value="P:innate immune response"/>
    <property type="evidence" value="ECO:0000250"/>
    <property type="project" value="UniProtKB"/>
</dbReference>
<dbReference type="GO" id="GO:0032728">
    <property type="term" value="P:positive regulation of interferon-beta production"/>
    <property type="evidence" value="ECO:0000250"/>
    <property type="project" value="UniProtKB"/>
</dbReference>
<dbReference type="GO" id="GO:0016239">
    <property type="term" value="P:positive regulation of macroautophagy"/>
    <property type="evidence" value="ECO:0000250"/>
    <property type="project" value="UniProtKB"/>
</dbReference>
<dbReference type="GO" id="GO:0032481">
    <property type="term" value="P:positive regulation of type I interferon production"/>
    <property type="evidence" value="ECO:0000250"/>
    <property type="project" value="UniProtKB"/>
</dbReference>
<dbReference type="GO" id="GO:0061709">
    <property type="term" value="P:reticulophagy"/>
    <property type="evidence" value="ECO:0000250"/>
    <property type="project" value="UniProtKB"/>
</dbReference>
<dbReference type="CDD" id="cd22658">
    <property type="entry name" value="STING_C_metazoan-like"/>
    <property type="match status" value="1"/>
</dbReference>
<dbReference type="FunFam" id="1.20.5.5200:FF:000001">
    <property type="entry name" value="Stimulator of interferon genes protein"/>
    <property type="match status" value="1"/>
</dbReference>
<dbReference type="FunFam" id="3.40.50.12100:FF:000001">
    <property type="entry name" value="Stimulator of interferon genes protein"/>
    <property type="match status" value="1"/>
</dbReference>
<dbReference type="Gene3D" id="1.20.5.5200">
    <property type="match status" value="1"/>
</dbReference>
<dbReference type="Gene3D" id="3.40.50.12100">
    <property type="entry name" value="Stimulator of interferon genes protein"/>
    <property type="match status" value="1"/>
</dbReference>
<dbReference type="InterPro" id="IPR029158">
    <property type="entry name" value="STING"/>
</dbReference>
<dbReference type="InterPro" id="IPR047191">
    <property type="entry name" value="STING_C_chordates"/>
</dbReference>
<dbReference type="InterPro" id="IPR038623">
    <property type="entry name" value="STING_C_sf"/>
</dbReference>
<dbReference type="InterPro" id="IPR055432">
    <property type="entry name" value="STING_LBD"/>
</dbReference>
<dbReference type="InterPro" id="IPR055434">
    <property type="entry name" value="STING_TM"/>
</dbReference>
<dbReference type="PANTHER" id="PTHR34339">
    <property type="entry name" value="STIMULATOR OF INTERFERON GENES PROTEIN"/>
    <property type="match status" value="1"/>
</dbReference>
<dbReference type="PANTHER" id="PTHR34339:SF1">
    <property type="entry name" value="STIMULATOR OF INTERFERON GENES PROTEIN"/>
    <property type="match status" value="1"/>
</dbReference>
<dbReference type="Pfam" id="PF15009">
    <property type="entry name" value="STING_LBD"/>
    <property type="match status" value="1"/>
</dbReference>
<dbReference type="Pfam" id="PF23417">
    <property type="entry name" value="STING_TM"/>
    <property type="match status" value="1"/>
</dbReference>
<evidence type="ECO:0000250" key="1">
    <source>
        <dbReference type="UniProtKB" id="E1C7U0"/>
    </source>
</evidence>
<evidence type="ECO:0000250" key="2">
    <source>
        <dbReference type="UniProtKB" id="Q3TBT3"/>
    </source>
</evidence>
<evidence type="ECO:0000250" key="3">
    <source>
        <dbReference type="UniProtKB" id="Q86WV6"/>
    </source>
</evidence>
<evidence type="ECO:0000255" key="4"/>
<evidence type="ECO:0000269" key="5">
    <source>
    </source>
</evidence>
<evidence type="ECO:0000269" key="6">
    <source>
    </source>
</evidence>
<evidence type="ECO:0000269" key="7">
    <source>
    </source>
</evidence>
<evidence type="ECO:0000269" key="8">
    <source>
    </source>
</evidence>
<evidence type="ECO:0000269" key="9">
    <source>
    </source>
</evidence>
<evidence type="ECO:0000303" key="10">
    <source>
    </source>
</evidence>
<evidence type="ECO:0000305" key="11"/>
<evidence type="ECO:0007744" key="12">
    <source>
        <dbReference type="PDB" id="6A03"/>
    </source>
</evidence>
<evidence type="ECO:0007744" key="13">
    <source>
        <dbReference type="PDB" id="6A04"/>
    </source>
</evidence>
<evidence type="ECO:0007744" key="14">
    <source>
        <dbReference type="PDB" id="6A05"/>
    </source>
</evidence>
<evidence type="ECO:0007744" key="15">
    <source>
        <dbReference type="PDB" id="6A06"/>
    </source>
</evidence>
<evidence type="ECO:0007744" key="16">
    <source>
        <dbReference type="PDB" id="6IYF"/>
    </source>
</evidence>
<evidence type="ECO:0007829" key="17">
    <source>
        <dbReference type="PDB" id="6A06"/>
    </source>
</evidence>
<evidence type="ECO:0007829" key="18">
    <source>
        <dbReference type="PDB" id="6IYF"/>
    </source>
</evidence>
<gene>
    <name evidence="3" type="primary">STING1</name>
    <name evidence="10" type="synonym">STING</name>
    <name evidence="3" type="synonym">TMEM173</name>
</gene>
<name>STING_PIG</name>
<comment type="function">
    <text evidence="2 3 6 8">Facilitator of innate immune signaling that acts as a sensor of cytosolic DNA from bacteria and viruses and promotes the production of type I interferon (IFN-alpha and IFN-beta) (PubMed:35584187). Innate immune response is triggered in response to non-CpG double-stranded DNA from viruses and bacteria delivered to the cytoplasm (By similarity). Acts by binding cyclic dinucleotides: recognizes and binds cyclic di-GMP (c-di-GMP), a second messenger produced by bacteria, cyclic UMP-AMP (2',3'-cUAMP), and cyclic GMP-AMP (cGAMP), a messenger produced by CGAS in response to DNA virus in the cytosol (By similarity). Upon binding to c-di-GMP, cUAMP or cGAMP, STING1 oligomerizes, translocates from the endoplasmic reticulum and is phosphorylated by TBK1 on the pLxIS motif, leading to recruitment and subsequent activation of the transcription factor IRF3 to induce expression of type I interferon and exert a potent anti-viral state (By similarity). Exhibits 2',3' phosphodiester linkage-specific ligand recognition: can bind both 2'-3' linked cGAMP (2'-3'-cGAMP) and 3'-3' linked cGAMP but is preferentially activated by 2'-3' linked cGAMP (PubMed:31167783). The preference for 2'-3'-cGAMP, compared to other linkage isomers is probably due to the ligand itself, whichs adopts an organized free-ligand conformation that resembles the STING1-bound conformation and pays low energy costs in changing into the active conformation (By similarity). In addition to promote the production of type I interferons, plays a direct role in autophagy (By similarity). Following cGAMP-binding, STING1 buds from the endoplasmic reticulum into COPII vesicles, which then form the endoplasmic reticulum-Golgi intermediate compartment (ERGIC) (By similarity). The ERGIC serves as the membrane source for WIPI2 recruitment and LC3 lipidation, leading to formation of autophagosomes that target cytosolic DNA or DNA viruses for degradation by the lysosome (By similarity). Promotes autophagy by acting as a proton channel that directs proton efflux from the Golgi to facilitate MAP1LC3B/LC3B lipidation (By similarity). The autophagy- and interferon-inducing activities can be uncoupled and autophagy induction is independent of TBK1 phosphorylation (By similarity). Autophagy is also triggered upon infection by bacteria: following c-di-GMP-binding, which is produced by live Gram-positive bacteria, promotes reticulophagy (By similarity). May be involved in translocon function, the translocon possibly being able to influence the induction of type I interferons (By similarity). May be involved in transduction of apoptotic signals via its association with the major histocompatibility complex class II (MHC-II) (By similarity).</text>
</comment>
<comment type="catalytic activity">
    <reaction evidence="3">
        <text>H(+)(in) = H(+)(out)</text>
        <dbReference type="Rhea" id="RHEA:34979"/>
        <dbReference type="ChEBI" id="CHEBI:15378"/>
    </reaction>
</comment>
<comment type="subunit">
    <text evidence="2 3">Homodimer; forms a homodimer in absence of cyclic nucleotide (c-di-GMP or cGAMP); 'Lys-63'-linked ubiquitination at Lys-150 is required for homodimerization (By similarity). Homotetramer; in presence of cyclic nucleotide (c-di-GMP or cGAMP), forms tetramers and higher-order oligomers through side-by-side packing (By similarity). Interacts (when phosphorylated) with IRF3; following activation and phosphorylation on the pLxIS motif by TBK1, recruits IRF3 (By similarity). Interacts with DDX58/RIG-I, MAVS and SSR2 (By similarity). Interacts with RNF5 and TRIM56 (By similarity). Interacts with TBK1; when homodimer, leading to subsequent production of IFN-beta (By similarity). Interacts with IFIT1 and IFIT2 (By similarity). Interacts with TRIM29; this interaction induces STING1 ubiquitination and subsequent degradation (By similarity). Associates with the MHC-II complex (By similarity). Interacts with STEEP1; interaction takes place upon cGAMP-activation and STING1 phosphorylation by MAP3K7/TAK1 and promotes STING1 translocation to COPII vesicles (By similarity). Interacts with SEC24A, SEC24B and SEC24C; promoting translocation to COPII vesicles (By similarity). Interacts (when ubiquitinated) with SQSTM1; leading to relocalization to autophagosomes (By similarity). Interacts with SURF4 (By similarity). Interacts with HNRNPA2B1 (By similarity). Interacts with ZDHHC1; ZDHHC1 constitutively interacts with STING1 and in presence of DNA viruses activates it by promoting its cGAMP-induced oligomerization and the recruitment of downstream signaling components (By similarity). Interacts with ZDHHC11; in presence of DNA viruses promotes the recruitment of IRF3 to STING1 (By similarity). Interacts with TOMM70 (By similarity). Interacts with TAB1; promoting recruitment of TAB1 to the endoplasmic reticulum membrane and subsequent activation of MAP3K7/TAK1 (By similarity). Interacts (via transmembrane domain) with TMEM203 (By similarity). Interacts with DDX41 (By similarity).</text>
</comment>
<comment type="subunit">
    <text evidence="7">(Microbial infection) Interacts with African swine fever virus/ASFV protein A528R; this interaction mediates STING1 degradation.</text>
</comment>
<comment type="subunit">
    <text evidence="9">(Microbial infection) Interacts with African swine fever virus/ASFV minor capsid protein p17.</text>
</comment>
<comment type="subunit">
    <text evidence="8">(Microbial infection) Interacts with Pseudorabies virus protein UL13; this interaction mediates STING1 degradation in a RNF5-dependent manner.</text>
</comment>
<comment type="subcellular location">
    <subcellularLocation>
        <location evidence="5 8">Endoplasmic reticulum membrane</location>
        <topology evidence="3 4">Multi-pass membrane protein</topology>
    </subcellularLocation>
    <subcellularLocation>
        <location evidence="3">Cytoplasm</location>
        <location evidence="3">Perinuclear region</location>
    </subcellularLocation>
    <subcellularLocation>
        <location evidence="3">Endoplasmic reticulum-Golgi intermediate compartment membrane</location>
        <topology evidence="4">Multi-pass membrane protein</topology>
    </subcellularLocation>
    <subcellularLocation>
        <location evidence="3">Golgi apparatus membrane</location>
        <topology evidence="4">Multi-pass membrane protein</topology>
    </subcellularLocation>
    <subcellularLocation>
        <location evidence="3">Cytoplasmic vesicle</location>
        <location evidence="3">Autophagosome membrane</location>
        <topology evidence="4">Multi-pass membrane protein</topology>
    </subcellularLocation>
    <subcellularLocation>
        <location evidence="5">Mitochondrion outer membrane</location>
        <topology evidence="4">Multi-pass membrane protein</topology>
    </subcellularLocation>
    <subcellularLocation>
        <location evidence="2">Cell membrane</location>
        <topology evidence="4">Multi-pass membrane protein</topology>
    </subcellularLocation>
    <text evidence="2 3">In response to double-stranded DNA stimulation, translocates from the endoplasmic reticulum through the endoplasmic reticulum-Golgi intermediate compartment and Golgi to post-Golgi vesicles, where the kinase TBK1 is recruited. Upon cGAMP-binding, translocates to the endoplasmic reticulum-Golgi intermediate compartment (ERGIC) in a process that is dependent on COPII vesicles; STING1-containing ERGIC serves as a membrane source for LC3 lipidation, which is a key step in autophagosome biogenesis. Localizes in the lysosome membrane in a TMEM203-dependent manner.</text>
</comment>
<comment type="tissue specificity">
    <text evidence="5">Expressed at higher level in the spleen, lymph node, lung and bone marrow, followed by the small intestine, heart, liver and brain, and to a lesser extent in the stomach and kidney.</text>
</comment>
<comment type="domain">
    <text evidence="1 3">In absence of cGAMP, the transmembrane and cytoplasmic regions interact to form an integrated, domain-swapped dimeric assembly (By similarity). In absence of cyclic nucleotide (c-di-GMP or cGAMP), the protein is autoinhibited by an intramolecular interaction between the cyclic dinucleotide-binding domain (CBD) and the C-terminal tail (CTT) (By similarity). Following cGAMP-binding, the cyclic dinucleotide-binding domain (CBD) is closed, leading to a 180 degrees rotation of the CBD domain relative to the transmembrane domain. This rotation is coupled to a conformational change in a loop on the side of the CBD dimer, which leads to the formation of the STING1 tetramer and higher-order oligomers through side-by-side packing (By similarity). The N-terminal part of the CBD region was initially though to contain a fifth transmembrane region (TM5) but is part of the folded, soluble CBD (By similarity).</text>
</comment>
<comment type="domain">
    <text evidence="3">The pLxIS motif constitutes an IRF3-binding motif: following phosphorylation by TBK1, the phosphorylated pLxIS motif of STING1 recruits IRF3. IRF3 is then phosphorylated and activated by TBK1 to induce type-I interferons and other cytokines.</text>
</comment>
<comment type="domain">
    <text evidence="3">The N-terminal domain interacts with glycerophospholipids and phospholipids.</text>
</comment>
<comment type="PTM">
    <text evidence="2 3">Phosphorylation by TBK1 leads to activation and production of IFN-beta. Following cyclic nucleotide (c-di-GMP or cGAMP)-binding, activation and translocation from the endoplasmic reticulum, STING1 is phosphorylated by TBK1 at Ser-365 in the pLxIS motif. The phosphorylated pLxIS motif constitutes an IRF3-binding motif, leading to recruitment of the transcription factor IRF3 to induce type-I interferons and other cytokines (By similarity). Phosphorylated on tyrosine residues upon MHC-II aggregation (By similarity). Dephosphorylation by PPP6C leads to inactivation and decreased production of IFN-beta (By similarity). Phosphorylation at Ser-357 is also required to activate IRF3 (By similarity). Phosphorylation at Ser-354 by MAP3K7/TAK1 facilitates its interaction with STEEP1, promoting STING1 translocation to COPII vesicles (By similarity).</text>
</comment>
<comment type="PTM">
    <text evidence="2 3">Ubiquitinated (By similarity). Ubiquitinated via 'Lys-63'-linked ubiquitin chains in response to double-stranded DNA treatment, leading to relocalization to autophagosomes and subsequent degradation; this process is dependent on SQSTM1 (By similarity). 'Lys-63'-linked ubiquitination mediated by TRIM56 at Lys-150 promotes homodimerization and recruitment of the antiviral kinase TBK1 and subsequent production of IFN-beta. 'Lys-48'-linked polyubiquitination at Lys-150 occurring after viral infection is mediated by RNF5 and leads to proteasomal degradation. 'Lys-11'-linked polyubiquitination at Lys-150 by RNF26 leads to stabilize STING1: it protects STING1 from RNF5-mediated 'Lys-48'-linked polyubiquitination (By similarity). 'Lys-33'-linked and 'Lys-48'-linked deubiquitinated by USP20; leading to its stabilization and promotion of innate antiviral response (By similarity). 'Lys-48'-linked deubiquitinated by USP44; leading to its stabilization and promotion of innate antiviral response (By similarity). Deubiquitinated by USP13; leading to inhibition of innate antiviral response (By similarity). 'Lys-63'-linked deubiquitinated by USP49; leading to inhibition of the subsequent recruitment of TBK1 to the signaling complex (By similarity). 'Lys-63'-linked ubiquitination mediated by RNF39 promotes the activation of the cGAS-STING pathway (By similarity).</text>
</comment>
<comment type="PTM">
    <text evidence="2">Palmitoylation takes place in the Golgi apparatus and creates a platform for the recruitment of TBK1.</text>
</comment>
<comment type="similarity">
    <text evidence="11">Belongs to the STING family.</text>
</comment>
<accession>B8XX90</accession>